<proteinExistence type="inferred from homology"/>
<reference key="1">
    <citation type="journal article" date="2003" name="Proc. Natl. Acad. Sci. U.S.A.">
        <title>Reductive genome evolution in Buchnera aphidicola.</title>
        <authorList>
            <person name="van Ham R.C.H.J."/>
            <person name="Kamerbeek J."/>
            <person name="Palacios C."/>
            <person name="Rausell C."/>
            <person name="Abascal F."/>
            <person name="Bastolla U."/>
            <person name="Fernandez J.M."/>
            <person name="Jimenez L."/>
            <person name="Postigo M."/>
            <person name="Silva F.J."/>
            <person name="Tamames J."/>
            <person name="Viguera E."/>
            <person name="Latorre A."/>
            <person name="Valencia A."/>
            <person name="Moran F."/>
            <person name="Moya A."/>
        </authorList>
    </citation>
    <scope>NUCLEOTIDE SEQUENCE [LARGE SCALE GENOMIC DNA]</scope>
    <source>
        <strain>Bp</strain>
    </source>
</reference>
<comment type="function">
    <text evidence="1">Catalyzes cross-linking of the peptidoglycan cell wall at the division septum.</text>
</comment>
<comment type="catalytic activity">
    <reaction evidence="1">
        <text>Preferential cleavage: (Ac)2-L-Lys-D-Ala-|-D-Ala. Also transpeptidation of peptidyl-alanyl moieties that are N-acyl substituents of D-alanine.</text>
        <dbReference type="EC" id="3.4.16.4"/>
    </reaction>
</comment>
<comment type="pathway">
    <text evidence="1">Cell wall biogenesis; peptidoglycan biosynthesis.</text>
</comment>
<comment type="subcellular location">
    <subcellularLocation>
        <location evidence="1">Cell inner membrane</location>
        <topology evidence="1">Single-pass membrane protein</topology>
    </subcellularLocation>
</comment>
<comment type="similarity">
    <text evidence="1">Belongs to the transpeptidase family. FtsI subfamily.</text>
</comment>
<protein>
    <recommendedName>
        <fullName evidence="1">Peptidoglycan D,D-transpeptidase FtsI</fullName>
        <ecNumber evidence="1">3.4.16.4</ecNumber>
    </recommendedName>
    <alternativeName>
        <fullName evidence="1">Penicillin-binding protein 3</fullName>
        <shortName evidence="1">PBP-3</shortName>
    </alternativeName>
</protein>
<evidence type="ECO:0000255" key="1">
    <source>
        <dbReference type="HAMAP-Rule" id="MF_02080"/>
    </source>
</evidence>
<gene>
    <name evidence="1" type="primary">ftsI</name>
    <name type="ordered locus">bbp_204</name>
</gene>
<feature type="chain" id="PRO_0000195460" description="Peptidoglycan D,D-transpeptidase FtsI">
    <location>
        <begin position="1"/>
        <end position="576"/>
    </location>
</feature>
<feature type="transmembrane region" description="Helical" evidence="1">
    <location>
        <begin position="22"/>
        <end position="42"/>
    </location>
</feature>
<feature type="active site" description="Acyl-ester intermediate" evidence="1">
    <location>
        <position position="308"/>
    </location>
</feature>
<organism>
    <name type="scientific">Buchnera aphidicola subsp. Baizongia pistaciae (strain Bp)</name>
    <dbReference type="NCBI Taxonomy" id="224915"/>
    <lineage>
        <taxon>Bacteria</taxon>
        <taxon>Pseudomonadati</taxon>
        <taxon>Pseudomonadota</taxon>
        <taxon>Gammaproteobacteria</taxon>
        <taxon>Enterobacterales</taxon>
        <taxon>Erwiniaceae</taxon>
        <taxon>Buchnera</taxon>
    </lineage>
</organism>
<sequence>MKYFFQNKKNIHIKNETFNNRITILLSLIIITIILVLSRITFLQIIVSKKLIYKSNLRSLRTQIEFNQRGNITDRLGYPLAINIPVKNICIDPKLLFSKQTHIYPNLKWKMLSTVLSIPLSEIFYRIKYSKNNHFIYLAHKVNPEISEYISQLHIPGIYILDDFKRFYPFGKLTSQLIGFTNIDNEGIEGVEKSFNKLLMGKPGKKQIITDRYGRIIEQHNLVNKIQSHDIILSIDCSFQKFIYHILNQAVMSNKAKFGVAILVNIPTGEILSMVNTPSYDPNNSSELFKNNPLIRNKAITDIFELGSTVKPMIIMKALEKKIITPETVINTSSLVVNKHIIHDVSYHHALTASDILKKSSNTGVSRLALSIPISELIDIYSKFELGKSTNLGLIGERNGVLNTNKKHWSDLDKVTLSFGYGLMATPLQLARIYTTIGRYGLSKPLSIIVKNDTNLKNDIFSKQVFSKKIIKTVINMLEEVAKPGGAGFKAAIKGYRIAVKTGTAKKINSKGKYDNKYVSYIVGFAPVSNPTFCLMIMINEPKSNKYYGGEIAAPIFKTIMQKILKIKNIKPDAYL</sequence>
<accession>Q89AQ0</accession>
<dbReference type="EC" id="3.4.16.4" evidence="1"/>
<dbReference type="EMBL" id="AE016826">
    <property type="protein sequence ID" value="AAO26936.1"/>
    <property type="molecule type" value="Genomic_DNA"/>
</dbReference>
<dbReference type="RefSeq" id="WP_011091337.1">
    <property type="nucleotide sequence ID" value="NC_004545.1"/>
</dbReference>
<dbReference type="SMR" id="Q89AQ0"/>
<dbReference type="STRING" id="224915.bbp_204"/>
<dbReference type="KEGG" id="bab:bbp_204"/>
<dbReference type="eggNOG" id="COG0768">
    <property type="taxonomic scope" value="Bacteria"/>
</dbReference>
<dbReference type="HOGENOM" id="CLU_009289_6_2_6"/>
<dbReference type="OrthoDB" id="9789078at2"/>
<dbReference type="UniPathway" id="UPA00219"/>
<dbReference type="Proteomes" id="UP000000601">
    <property type="component" value="Chromosome"/>
</dbReference>
<dbReference type="GO" id="GO:0005886">
    <property type="term" value="C:plasma membrane"/>
    <property type="evidence" value="ECO:0007669"/>
    <property type="project" value="UniProtKB-SubCell"/>
</dbReference>
<dbReference type="GO" id="GO:0008658">
    <property type="term" value="F:penicillin binding"/>
    <property type="evidence" value="ECO:0007669"/>
    <property type="project" value="InterPro"/>
</dbReference>
<dbReference type="GO" id="GO:0008955">
    <property type="term" value="F:peptidoglycan glycosyltransferase activity"/>
    <property type="evidence" value="ECO:0007669"/>
    <property type="project" value="InterPro"/>
</dbReference>
<dbReference type="GO" id="GO:0009002">
    <property type="term" value="F:serine-type D-Ala-D-Ala carboxypeptidase activity"/>
    <property type="evidence" value="ECO:0007669"/>
    <property type="project" value="UniProtKB-UniRule"/>
</dbReference>
<dbReference type="GO" id="GO:0071555">
    <property type="term" value="P:cell wall organization"/>
    <property type="evidence" value="ECO:0007669"/>
    <property type="project" value="UniProtKB-KW"/>
</dbReference>
<dbReference type="GO" id="GO:0000917">
    <property type="term" value="P:division septum assembly"/>
    <property type="evidence" value="ECO:0007669"/>
    <property type="project" value="UniProtKB-KW"/>
</dbReference>
<dbReference type="GO" id="GO:0043093">
    <property type="term" value="P:FtsZ-dependent cytokinesis"/>
    <property type="evidence" value="ECO:0007669"/>
    <property type="project" value="UniProtKB-UniRule"/>
</dbReference>
<dbReference type="GO" id="GO:0009252">
    <property type="term" value="P:peptidoglycan biosynthetic process"/>
    <property type="evidence" value="ECO:0007669"/>
    <property type="project" value="UniProtKB-UniRule"/>
</dbReference>
<dbReference type="GO" id="GO:0006508">
    <property type="term" value="P:proteolysis"/>
    <property type="evidence" value="ECO:0007669"/>
    <property type="project" value="UniProtKB-KW"/>
</dbReference>
<dbReference type="GO" id="GO:0008360">
    <property type="term" value="P:regulation of cell shape"/>
    <property type="evidence" value="ECO:0007669"/>
    <property type="project" value="UniProtKB-KW"/>
</dbReference>
<dbReference type="Gene3D" id="3.30.450.330">
    <property type="match status" value="1"/>
</dbReference>
<dbReference type="Gene3D" id="3.40.710.10">
    <property type="entry name" value="DD-peptidase/beta-lactamase superfamily"/>
    <property type="match status" value="1"/>
</dbReference>
<dbReference type="Gene3D" id="3.90.1310.10">
    <property type="entry name" value="Penicillin-binding protein 2a (Domain 2)"/>
    <property type="match status" value="1"/>
</dbReference>
<dbReference type="HAMAP" id="MF_02080">
    <property type="entry name" value="FtsI_transpept"/>
    <property type="match status" value="1"/>
</dbReference>
<dbReference type="InterPro" id="IPR050515">
    <property type="entry name" value="Bact_Transpept/Beta-Lactamase"/>
</dbReference>
<dbReference type="InterPro" id="IPR012338">
    <property type="entry name" value="Beta-lactam/transpept-like"/>
</dbReference>
<dbReference type="InterPro" id="IPR037532">
    <property type="entry name" value="FtsI_transpept"/>
</dbReference>
<dbReference type="InterPro" id="IPR005311">
    <property type="entry name" value="PBP_dimer"/>
</dbReference>
<dbReference type="InterPro" id="IPR036138">
    <property type="entry name" value="PBP_dimer_sf"/>
</dbReference>
<dbReference type="InterPro" id="IPR001460">
    <property type="entry name" value="PCN-bd_Tpept"/>
</dbReference>
<dbReference type="PANTHER" id="PTHR30627">
    <property type="entry name" value="PEPTIDOGLYCAN D,D-TRANSPEPTIDASE"/>
    <property type="match status" value="1"/>
</dbReference>
<dbReference type="PANTHER" id="PTHR30627:SF1">
    <property type="entry name" value="PEPTIDOGLYCAN D,D-TRANSPEPTIDASE FTSI"/>
    <property type="match status" value="1"/>
</dbReference>
<dbReference type="Pfam" id="PF03717">
    <property type="entry name" value="PBP_dimer"/>
    <property type="match status" value="1"/>
</dbReference>
<dbReference type="Pfam" id="PF00905">
    <property type="entry name" value="Transpeptidase"/>
    <property type="match status" value="1"/>
</dbReference>
<dbReference type="SUPFAM" id="SSF56601">
    <property type="entry name" value="beta-lactamase/transpeptidase-like"/>
    <property type="match status" value="1"/>
</dbReference>
<dbReference type="SUPFAM" id="SSF56519">
    <property type="entry name" value="Penicillin binding protein dimerisation domain"/>
    <property type="match status" value="1"/>
</dbReference>
<keyword id="KW-0121">Carboxypeptidase</keyword>
<keyword id="KW-0131">Cell cycle</keyword>
<keyword id="KW-0132">Cell division</keyword>
<keyword id="KW-0997">Cell inner membrane</keyword>
<keyword id="KW-1003">Cell membrane</keyword>
<keyword id="KW-0133">Cell shape</keyword>
<keyword id="KW-0961">Cell wall biogenesis/degradation</keyword>
<keyword id="KW-0378">Hydrolase</keyword>
<keyword id="KW-0472">Membrane</keyword>
<keyword id="KW-0573">Peptidoglycan synthesis</keyword>
<keyword id="KW-0645">Protease</keyword>
<keyword id="KW-1185">Reference proteome</keyword>
<keyword id="KW-0717">Septation</keyword>
<keyword id="KW-0812">Transmembrane</keyword>
<keyword id="KW-1133">Transmembrane helix</keyword>
<name>FTSI_BUCBP</name>